<gene>
    <name type="primary">Kibra</name>
    <name type="ORF">GF18133</name>
</gene>
<feature type="chain" id="PRO_0000392968" description="Protein kibra">
    <location>
        <begin position="1"/>
        <end position="1271"/>
    </location>
</feature>
<feature type="domain" description="WW 1" evidence="4">
    <location>
        <begin position="45"/>
        <end position="78"/>
    </location>
</feature>
<feature type="domain" description="WW 2" evidence="4">
    <location>
        <begin position="92"/>
        <end position="125"/>
    </location>
</feature>
<feature type="domain" description="C2" evidence="3">
    <location>
        <begin position="685"/>
        <end position="805"/>
    </location>
</feature>
<feature type="region of interest" description="Disordered" evidence="5">
    <location>
        <begin position="1"/>
        <end position="51"/>
    </location>
</feature>
<feature type="region of interest" description="Disordered" evidence="5">
    <location>
        <begin position="518"/>
        <end position="566"/>
    </location>
</feature>
<feature type="region of interest" description="Disordered" evidence="5">
    <location>
        <begin position="838"/>
        <end position="899"/>
    </location>
</feature>
<feature type="region of interest" description="Disordered" evidence="5">
    <location>
        <begin position="1143"/>
        <end position="1169"/>
    </location>
</feature>
<feature type="region of interest" description="Disordered" evidence="5">
    <location>
        <begin position="1201"/>
        <end position="1265"/>
    </location>
</feature>
<feature type="coiled-coil region" evidence="2">
    <location>
        <begin position="192"/>
        <end position="223"/>
    </location>
</feature>
<feature type="coiled-coil region" evidence="2">
    <location>
        <begin position="326"/>
        <end position="454"/>
    </location>
</feature>
<feature type="coiled-coil region" evidence="2">
    <location>
        <begin position="1039"/>
        <end position="1066"/>
    </location>
</feature>
<feature type="compositionally biased region" description="Low complexity" evidence="5">
    <location>
        <begin position="18"/>
        <end position="43"/>
    </location>
</feature>
<feature type="compositionally biased region" description="Low complexity" evidence="5">
    <location>
        <begin position="522"/>
        <end position="543"/>
    </location>
</feature>
<feature type="compositionally biased region" description="Low complexity" evidence="5">
    <location>
        <begin position="850"/>
        <end position="862"/>
    </location>
</feature>
<feature type="compositionally biased region" description="Acidic residues" evidence="5">
    <location>
        <begin position="878"/>
        <end position="897"/>
    </location>
</feature>
<feature type="compositionally biased region" description="Acidic residues" evidence="5">
    <location>
        <begin position="1154"/>
        <end position="1169"/>
    </location>
</feature>
<feature type="compositionally biased region" description="Pro residues" evidence="5">
    <location>
        <begin position="1206"/>
        <end position="1217"/>
    </location>
</feature>
<feature type="compositionally biased region" description="Low complexity" evidence="5">
    <location>
        <begin position="1218"/>
        <end position="1249"/>
    </location>
</feature>
<keyword id="KW-1003">Cell membrane</keyword>
<keyword id="KW-0175">Coiled coil</keyword>
<keyword id="KW-0963">Cytoplasm</keyword>
<keyword id="KW-0472">Membrane</keyword>
<keyword id="KW-0597">Phosphoprotein</keyword>
<keyword id="KW-1185">Reference proteome</keyword>
<keyword id="KW-0677">Repeat</keyword>
<keyword id="KW-0804">Transcription</keyword>
<keyword id="KW-0805">Transcription regulation</keyword>
<name>KIBRA_DROAN</name>
<accession>B3LWS4</accession>
<organism>
    <name type="scientific">Drosophila ananassae</name>
    <name type="common">Fruit fly</name>
    <dbReference type="NCBI Taxonomy" id="7217"/>
    <lineage>
        <taxon>Eukaryota</taxon>
        <taxon>Metazoa</taxon>
        <taxon>Ecdysozoa</taxon>
        <taxon>Arthropoda</taxon>
        <taxon>Hexapoda</taxon>
        <taxon>Insecta</taxon>
        <taxon>Pterygota</taxon>
        <taxon>Neoptera</taxon>
        <taxon>Endopterygota</taxon>
        <taxon>Diptera</taxon>
        <taxon>Brachycera</taxon>
        <taxon>Muscomorpha</taxon>
        <taxon>Ephydroidea</taxon>
        <taxon>Drosophilidae</taxon>
        <taxon>Drosophila</taxon>
        <taxon>Sophophora</taxon>
    </lineage>
</organism>
<protein>
    <recommendedName>
        <fullName>Protein kibra</fullName>
    </recommendedName>
</protein>
<evidence type="ECO:0000250" key="1"/>
<evidence type="ECO:0000255" key="2"/>
<evidence type="ECO:0000255" key="3">
    <source>
        <dbReference type="PROSITE-ProRule" id="PRU00041"/>
    </source>
</evidence>
<evidence type="ECO:0000255" key="4">
    <source>
        <dbReference type="PROSITE-ProRule" id="PRU00224"/>
    </source>
</evidence>
<evidence type="ECO:0000256" key="5">
    <source>
        <dbReference type="SAM" id="MobiDB-lite"/>
    </source>
</evidence>
<evidence type="ECO:0000305" key="6"/>
<sequence>MPNQSQHHLQPHPHHLRPQQQQQQQQQQQQQQHHRQQQQQNHSDFPLPDGWDIAKDFDGKTYYIDHINKKTTWLDPRDCYTKPQTFEDCVGDELPMGWEESYDPNIGLYYINHLAQSTQLEDPRQEWKSVQEQMLSDYLSAAQDQLENKREMFDVKQQRLLWAQEEYNHLKLAASRSSLCSSSSSMSRHDPELLRADLMLARERVHQLKQELNHITNDISYTERGMNTLYSVGEKINARQNGCYDIAEVQAIREEMLKVHKSLVSGEKVREELMRSLVQIKNELSRQQISEENSDLASPFDRVCVASQTDLCGSTGDNLNGGARFAEMAKTKLQYAEWRKHIKKLQQQLADHVERIEPGQLESDKDRILLIQEKEKLLNDLNSISLKSRSEEEKRVIQQTRNKLEEDLKEAYEANNTCVANRLRFHEEKQLLLDKLQEALKSTKLLEERLKSFSSESTFSISSGSSLGSLSTASSKSALSFTDIYIDPFAVDSPIDVVDLRRRSQRLFQQHQRLHPVHPGLQQQQQQQQQSSEVSLSPRSSLSMETPPASPMKYNPGADPTTPALKEEPTYANALPAPPAYTAPPPVPVSGVRARPYDLDSTVLDCMMLEAKLQKLNLGTPLNLAAAPLSPISEKPSLLDLPQEMLSRSSSTSNTRSVSAAVSNESVAGDSGVFEASRAHLPRKELAQVQIGLKYLKLEGVLVVSLERANNLLALWTASADNSQVYLRAALLPNSLTSIRTKALGDFQKPVFNDTFAVPITLDKLLTKSLQVTVVTMTGQKEEIIGTVQISMAEFNPEDSTLKWYNVLSSKFIPTFESLDLPSTSAAAAAVAVAASSSASNSIREESSDESTITSSQTSTLTRNQAPPMELQAQIAEEQPEQDGSDDDDDDDEEEDDNNKKIIREVAVGLMNSGCMLDTYLQNMKQEFADKETNTDCAFLPEKSRGQSQMMDDRPVKRSQTFTPSAAVSKNRYNCRLNRSDSDSAMHCGVAPHTFQRGAAERRSLRFHTKAPKSVTKLHHTHIPRTSLDLELDLQAQHSKLYFLNDQIAKLQNLKEVLQKACENKDPLIAAWAIENEEFQRLVARADPAKCPEERQLQKLLMKTAKEIHKLRKTKVPKGCPDLVSFKEKITFFTRKGMSVPELPSEFTLPEANPIEEEEEEEEEDEDEFYNAAETAIAINTALVASNNRNKNLTDHLNRVSNYAAPKPPTIPAPPAASPAAPAGSNPPSATPSTTPATQATTTAVPVPADDNNPEQQRYDYVVDRTYGVEV</sequence>
<comment type="function">
    <text evidence="1">Regulator of the Hippo/SWH (Sav/Wts/Hpo) signaling pathway, a signaling pathway that plays a pivotal role in organ size control and tumor suppression by restricting proliferation and promoting apoptosis. The core of this pathway is composed of a kinase cascade wherein Hippo (Hpo), in complex with its regulatory protein Salvador (Sav), phosphorylates and activates Warts (Wts) in complex with its regulatory protein Mats, which in turn phosphorylates and inactivates the Yorkie (Yki) oncoprotein. Kibra acts synergistically along with Ex and Mer to regulate the Hippo signaling pathway (By similarity).</text>
</comment>
<comment type="subunit">
    <text evidence="1">Forms a complex with Mer and Ex. Interacts (via domain WW 1) with Ex (via RXPPXY motif). Interacts with Mer, Sav, Hpo and Wts (By similarity).</text>
</comment>
<comment type="subcellular location">
    <subcellularLocation>
        <location evidence="1">Cytoplasm</location>
    </subcellularLocation>
    <subcellularLocation>
        <location evidence="1">Apical cell membrane</location>
    </subcellularLocation>
    <text evidence="1">Localizes at the apical cortex of epithelial cells and cytoplasmic, punctate.</text>
</comment>
<comment type="similarity">
    <text evidence="6">Belongs to the WWC family. KIBRA subfamily.</text>
</comment>
<reference key="1">
    <citation type="journal article" date="2007" name="Nature">
        <title>Evolution of genes and genomes on the Drosophila phylogeny.</title>
        <authorList>
            <consortium name="Drosophila 12 genomes consortium"/>
        </authorList>
    </citation>
    <scope>NUCLEOTIDE SEQUENCE [LARGE SCALE GENOMIC DNA]</scope>
    <source>
        <strain>Tucson 14024-0371.13</strain>
    </source>
</reference>
<dbReference type="EMBL" id="CH902617">
    <property type="protein sequence ID" value="EDV42712.1"/>
    <property type="molecule type" value="Genomic_DNA"/>
</dbReference>
<dbReference type="SMR" id="B3LWS4"/>
<dbReference type="FunCoup" id="B3LWS4">
    <property type="interactions" value="296"/>
</dbReference>
<dbReference type="STRING" id="7217.B3LWS4"/>
<dbReference type="EnsemblMetazoa" id="FBtr0122833">
    <property type="protein sequence ID" value="FBpp0121325"/>
    <property type="gene ID" value="FBgn0095151"/>
</dbReference>
<dbReference type="EnsemblMetazoa" id="XM_001954115.4">
    <property type="protein sequence ID" value="XP_001954151.1"/>
    <property type="gene ID" value="LOC6500911"/>
</dbReference>
<dbReference type="GeneID" id="6500911"/>
<dbReference type="KEGG" id="dan:6500911"/>
<dbReference type="CTD" id="41783"/>
<dbReference type="eggNOG" id="KOG0940">
    <property type="taxonomic scope" value="Eukaryota"/>
</dbReference>
<dbReference type="eggNOG" id="KOG3209">
    <property type="taxonomic scope" value="Eukaryota"/>
</dbReference>
<dbReference type="HOGENOM" id="CLU_005420_1_0_1"/>
<dbReference type="InParanoid" id="B3LWS4"/>
<dbReference type="OMA" id="QVTVVSM"/>
<dbReference type="OrthoDB" id="2020426at2759"/>
<dbReference type="PhylomeDB" id="B3LWS4"/>
<dbReference type="ChiTaRS" id="kibra">
    <property type="organism name" value="fly"/>
</dbReference>
<dbReference type="Proteomes" id="UP000007801">
    <property type="component" value="Unassembled WGS sequence"/>
</dbReference>
<dbReference type="GO" id="GO:0106037">
    <property type="term" value="C:apicomedial cortex"/>
    <property type="evidence" value="ECO:0007669"/>
    <property type="project" value="EnsemblMetazoa"/>
</dbReference>
<dbReference type="GO" id="GO:0005911">
    <property type="term" value="C:cell-cell junction"/>
    <property type="evidence" value="ECO:0007669"/>
    <property type="project" value="EnsemblMetazoa"/>
</dbReference>
<dbReference type="GO" id="GO:0098592">
    <property type="term" value="C:cytoplasmic side of apical plasma membrane"/>
    <property type="evidence" value="ECO:0007669"/>
    <property type="project" value="EnsemblMetazoa"/>
</dbReference>
<dbReference type="GO" id="GO:0036375">
    <property type="term" value="C:Kibra-Ex-Mer complex"/>
    <property type="evidence" value="ECO:0007669"/>
    <property type="project" value="EnsemblMetazoa"/>
</dbReference>
<dbReference type="GO" id="GO:0019900">
    <property type="term" value="F:kinase binding"/>
    <property type="evidence" value="ECO:0007669"/>
    <property type="project" value="TreeGrafter"/>
</dbReference>
<dbReference type="GO" id="GO:0060090">
    <property type="term" value="F:molecular adaptor activity"/>
    <property type="evidence" value="ECO:0007669"/>
    <property type="project" value="TreeGrafter"/>
</dbReference>
<dbReference type="GO" id="GO:0007298">
    <property type="term" value="P:border follicle cell migration"/>
    <property type="evidence" value="ECO:0007669"/>
    <property type="project" value="EnsemblMetazoa"/>
</dbReference>
<dbReference type="GO" id="GO:0060253">
    <property type="term" value="P:negative regulation of glial cell proliferation"/>
    <property type="evidence" value="ECO:0007669"/>
    <property type="project" value="EnsemblMetazoa"/>
</dbReference>
<dbReference type="GO" id="GO:0046621">
    <property type="term" value="P:negative regulation of organ growth"/>
    <property type="evidence" value="ECO:0007669"/>
    <property type="project" value="EnsemblMetazoa"/>
</dbReference>
<dbReference type="GO" id="GO:0043065">
    <property type="term" value="P:positive regulation of apoptotic process"/>
    <property type="evidence" value="ECO:0007669"/>
    <property type="project" value="EnsemblMetazoa"/>
</dbReference>
<dbReference type="GO" id="GO:0035332">
    <property type="term" value="P:positive regulation of hippo signaling"/>
    <property type="evidence" value="ECO:0000250"/>
    <property type="project" value="UniProtKB"/>
</dbReference>
<dbReference type="GO" id="GO:0045463">
    <property type="term" value="P:R8 cell development"/>
    <property type="evidence" value="ECO:0007669"/>
    <property type="project" value="EnsemblMetazoa"/>
</dbReference>
<dbReference type="GO" id="GO:0045464">
    <property type="term" value="P:R8 cell fate specification"/>
    <property type="evidence" value="ECO:0007669"/>
    <property type="project" value="EnsemblMetazoa"/>
</dbReference>
<dbReference type="GO" id="GO:0006355">
    <property type="term" value="P:regulation of DNA-templated transcription"/>
    <property type="evidence" value="ECO:0007669"/>
    <property type="project" value="EnsemblMetazoa"/>
</dbReference>
<dbReference type="CDD" id="cd00201">
    <property type="entry name" value="WW"/>
    <property type="match status" value="2"/>
</dbReference>
<dbReference type="FunFam" id="2.60.40.150:FF:000228">
    <property type="entry name" value="Blast:Protein kibra"/>
    <property type="match status" value="1"/>
</dbReference>
<dbReference type="Gene3D" id="2.20.70.10">
    <property type="match status" value="2"/>
</dbReference>
<dbReference type="Gene3D" id="2.60.40.150">
    <property type="entry name" value="C2 domain"/>
    <property type="match status" value="1"/>
</dbReference>
<dbReference type="InterPro" id="IPR000008">
    <property type="entry name" value="C2_dom"/>
</dbReference>
<dbReference type="InterPro" id="IPR035892">
    <property type="entry name" value="C2_domain_sf"/>
</dbReference>
<dbReference type="InterPro" id="IPR001202">
    <property type="entry name" value="WW_dom"/>
</dbReference>
<dbReference type="InterPro" id="IPR036020">
    <property type="entry name" value="WW_dom_sf"/>
</dbReference>
<dbReference type="InterPro" id="IPR051105">
    <property type="entry name" value="WWC/KIBRA_Hippo_Reg"/>
</dbReference>
<dbReference type="PANTHER" id="PTHR14791">
    <property type="entry name" value="BOMB/KIRA PROTEINS"/>
    <property type="match status" value="1"/>
</dbReference>
<dbReference type="PANTHER" id="PTHR14791:SF29">
    <property type="entry name" value="PROTEIN KIBRA"/>
    <property type="match status" value="1"/>
</dbReference>
<dbReference type="Pfam" id="PF00168">
    <property type="entry name" value="C2"/>
    <property type="match status" value="1"/>
</dbReference>
<dbReference type="Pfam" id="PF00397">
    <property type="entry name" value="WW"/>
    <property type="match status" value="1"/>
</dbReference>
<dbReference type="SMART" id="SM00239">
    <property type="entry name" value="C2"/>
    <property type="match status" value="1"/>
</dbReference>
<dbReference type="SMART" id="SM00456">
    <property type="entry name" value="WW"/>
    <property type="match status" value="2"/>
</dbReference>
<dbReference type="SUPFAM" id="SSF49562">
    <property type="entry name" value="C2 domain (Calcium/lipid-binding domain, CaLB)"/>
    <property type="match status" value="1"/>
</dbReference>
<dbReference type="SUPFAM" id="SSF51045">
    <property type="entry name" value="WW domain"/>
    <property type="match status" value="2"/>
</dbReference>
<dbReference type="PROSITE" id="PS50004">
    <property type="entry name" value="C2"/>
    <property type="match status" value="1"/>
</dbReference>
<dbReference type="PROSITE" id="PS01159">
    <property type="entry name" value="WW_DOMAIN_1"/>
    <property type="match status" value="1"/>
</dbReference>
<dbReference type="PROSITE" id="PS50020">
    <property type="entry name" value="WW_DOMAIN_2"/>
    <property type="match status" value="2"/>
</dbReference>
<proteinExistence type="inferred from homology"/>